<accession>Q9S7Z3</accession>
<accession>Q8W122</accession>
<accession>Q9M6R0</accession>
<accession>Q9XHP8</accession>
<accession>Q9ZPM2</accession>
<comment type="function">
    <text evidence="6 7 9 10 12">Involved in the synthesis of phytochelatins (PC) and homophytochelatins (hPC), the heavy-metal-binding peptides of plants. Also involved in glutathione-conjugates degradation.</text>
</comment>
<comment type="catalytic activity">
    <reaction evidence="1">
        <text>[Glu(-Cys)](n)-Gly + glutathione + H(+) = [Glu(-Cys)](n+1)-Gly + glycine</text>
        <dbReference type="Rhea" id="RHEA:17917"/>
        <dbReference type="Rhea" id="RHEA-COMP:12438"/>
        <dbReference type="Rhea" id="RHEA-COMP:12439"/>
        <dbReference type="ChEBI" id="CHEBI:15378"/>
        <dbReference type="ChEBI" id="CHEBI:57305"/>
        <dbReference type="ChEBI" id="CHEBI:57925"/>
        <dbReference type="ChEBI" id="CHEBI:131728"/>
        <dbReference type="EC" id="2.3.2.15"/>
    </reaction>
</comment>
<comment type="activity regulation">
    <text evidence="2 6 8">Requires cadmium for activity. Also activated in vitro or in heterologous system by Ag(+), Hg(+), Zn(2+), Cu(2+), Fe(2+) or Fe(3+) ions, but not by Co(2+) or Ni(2+) ions.</text>
</comment>
<comment type="tissue specificity">
    <text evidence="3 4">Expressed in roots and shoots.</text>
</comment>
<comment type="developmental stage">
    <text evidence="5">Expressed constitutively.</text>
</comment>
<comment type="induction">
    <text evidence="3 5">Induced by copper, and by cadmium during the early stages of plant development. Gradual decrease of cadmium induction as plants continue to grow, and by 15 day after germination, total loss of induction.</text>
</comment>
<comment type="domain">
    <text>The intermediate part (284-372) is important for enzyme stabilization.</text>
</comment>
<comment type="domain">
    <text>The C-terminal part (373-485) is required to determine enzyme responsiveness to a broad range of heavy metals.</text>
</comment>
<comment type="disruption phenotype">
    <text evidence="12">Plants are highly sensitive to Cd (20- to 40-fold) and AsO(4)(3-) ions, sensitive (eightfold) to Ag ions, slightly sensitive (twofold) to Cu and Hg ions, and insensitive to Zn, SeO(3)(2-) and Ni ions.</text>
</comment>
<comment type="miscellaneous">
    <text>Homoglutathione (hGSH) is a good acceptor, but a poor donor, of gamma-glutamylcysteine units.</text>
</comment>
<comment type="similarity">
    <text evidence="1">Belongs to the phytochelatin synthase family.</text>
</comment>
<comment type="sequence caution" evidence="13">
    <conflict type="erroneous gene model prediction">
        <sequence resource="EMBL-CDS" id="AAD29446"/>
    </conflict>
</comment>
<proteinExistence type="evidence at protein level"/>
<gene>
    <name type="primary">PCS1</name>
    <name type="synonym">ARA8</name>
    <name type="synonym">CAD1</name>
    <name type="ordered locus">At5g44070</name>
    <name type="ORF">MRH10.11</name>
    <name type="ORF">MRH10_18</name>
</gene>
<sequence>MAMASLYRRSLPSPPAIDFSSAEGKLIFNEALQKGTMEGFFRLISYFQTQSEPAYCGLASLSVVLNALSIDPGRKWKGPWRWFDESMLDCCEPLEVVKEKGISFGKVVCLAHCSGAKVEAFRTSQSTIDDFRKFVVKCTSSENCHMISTYHRGVFKQTGTGHFSPIGGYNAERDMALILDVARFKYPPHWVPLKLLWEAMDSIDQSTGKRRGFMLISRPHREPGLLYTLSCKDESWIEIAKYLKEDVPRLVSSQHVDSVEKIISVVFKSLPSNFNQFIRWVAEIRITEDSNQNLSAEEKSRLKLKQLVLKEVHETELFKHINKFLSTVGYEDSLTYAAAKACCQGAEILSGSPSKEFCCRETCVKCIKGPDDSEGTVVTGVVVRDGNEQKVDLLVPSTQTECECGPEATYPAGNDVFTALLLALPPQTWSGIKDQALMHEMKQLISMASLPTLLQEEVLHLRRQLQLLKRCQENKEEDDLAAPAY</sequence>
<dbReference type="EC" id="2.3.2.15"/>
<dbReference type="EMBL" id="AF135155">
    <property type="protein sequence ID" value="AAD41794.1"/>
    <property type="molecule type" value="mRNA"/>
</dbReference>
<dbReference type="EMBL" id="AF093753">
    <property type="protein sequence ID" value="AAD50593.1"/>
    <property type="molecule type" value="mRNA"/>
</dbReference>
<dbReference type="EMBL" id="AF085230">
    <property type="protein sequence ID" value="AAD16046.1"/>
    <property type="molecule type" value="mRNA"/>
</dbReference>
<dbReference type="EMBL" id="AF085231">
    <property type="protein sequence ID" value="AAD29446.1"/>
    <property type="status" value="ALT_SEQ"/>
    <property type="molecule type" value="Genomic_DNA"/>
</dbReference>
<dbReference type="EMBL" id="AF162689">
    <property type="protein sequence ID" value="AAF42805.1"/>
    <property type="molecule type" value="mRNA"/>
</dbReference>
<dbReference type="EMBL" id="AF461180">
    <property type="protein sequence ID" value="AAL66747.1"/>
    <property type="molecule type" value="mRNA"/>
</dbReference>
<dbReference type="EMBL" id="AB006703">
    <property type="protein sequence ID" value="BAB09067.1"/>
    <property type="molecule type" value="Genomic_DNA"/>
</dbReference>
<dbReference type="EMBL" id="CP002688">
    <property type="protein sequence ID" value="AED95055.1"/>
    <property type="molecule type" value="Genomic_DNA"/>
</dbReference>
<dbReference type="EMBL" id="AY079384">
    <property type="protein sequence ID" value="AAL85115.1"/>
    <property type="molecule type" value="mRNA"/>
</dbReference>
<dbReference type="EMBL" id="AY048257">
    <property type="protein sequence ID" value="AAK82519.1"/>
    <property type="molecule type" value="mRNA"/>
</dbReference>
<dbReference type="EMBL" id="AY039951">
    <property type="protein sequence ID" value="AAK64055.1"/>
    <property type="molecule type" value="mRNA"/>
</dbReference>
<dbReference type="RefSeq" id="NP_199220.1">
    <property type="nucleotide sequence ID" value="NM_123774.4"/>
</dbReference>
<dbReference type="SMR" id="Q9S7Z3"/>
<dbReference type="BioGRID" id="19680">
    <property type="interactions" value="3"/>
</dbReference>
<dbReference type="FunCoup" id="Q9S7Z3">
    <property type="interactions" value="143"/>
</dbReference>
<dbReference type="IntAct" id="Q9S7Z3">
    <property type="interactions" value="2"/>
</dbReference>
<dbReference type="STRING" id="3702.Q9S7Z3"/>
<dbReference type="MEROPS" id="C83.002"/>
<dbReference type="iPTMnet" id="Q9S7Z3"/>
<dbReference type="PaxDb" id="3702-AT5G44070.1"/>
<dbReference type="ProteomicsDB" id="236374"/>
<dbReference type="EnsemblPlants" id="AT5G44070.1">
    <property type="protein sequence ID" value="AT5G44070.1"/>
    <property type="gene ID" value="AT5G44070"/>
</dbReference>
<dbReference type="GeneID" id="834430"/>
<dbReference type="Gramene" id="AT5G44070.1">
    <property type="protein sequence ID" value="AT5G44070.1"/>
    <property type="gene ID" value="AT5G44070"/>
</dbReference>
<dbReference type="KEGG" id="ath:AT5G44070"/>
<dbReference type="Araport" id="AT5G44070"/>
<dbReference type="TAIR" id="AT5G44070">
    <property type="gene designation" value="CAD1"/>
</dbReference>
<dbReference type="eggNOG" id="KOG0632">
    <property type="taxonomic scope" value="Eukaryota"/>
</dbReference>
<dbReference type="HOGENOM" id="CLU_046059_0_0_1"/>
<dbReference type="InParanoid" id="Q9S7Z3"/>
<dbReference type="OMA" id="HRAPFKQ"/>
<dbReference type="OrthoDB" id="448954at2759"/>
<dbReference type="PhylomeDB" id="Q9S7Z3"/>
<dbReference type="BioCyc" id="ARA:AT5G44070-MONOMER"/>
<dbReference type="BioCyc" id="MetaCyc:AT5G44070-MONOMER"/>
<dbReference type="BRENDA" id="2.3.2.15">
    <property type="organism ID" value="399"/>
</dbReference>
<dbReference type="SABIO-RK" id="Q9S7Z3"/>
<dbReference type="PRO" id="PR:Q9S7Z3"/>
<dbReference type="Proteomes" id="UP000006548">
    <property type="component" value="Chromosome 5"/>
</dbReference>
<dbReference type="ExpressionAtlas" id="Q9S7Z3">
    <property type="expression patterns" value="baseline and differential"/>
</dbReference>
<dbReference type="GO" id="GO:0005829">
    <property type="term" value="C:cytosol"/>
    <property type="evidence" value="ECO:0000314"/>
    <property type="project" value="TAIR"/>
</dbReference>
<dbReference type="GO" id="GO:0009536">
    <property type="term" value="C:plastid"/>
    <property type="evidence" value="ECO:0007005"/>
    <property type="project" value="TAIR"/>
</dbReference>
<dbReference type="GO" id="GO:0044604">
    <property type="term" value="F:ABC-type phytochelatin transporter activity"/>
    <property type="evidence" value="ECO:0000314"/>
    <property type="project" value="TAIR"/>
</dbReference>
<dbReference type="GO" id="GO:0015446">
    <property type="term" value="F:ATPase-coupled arsenite transmembrane transporter activity"/>
    <property type="evidence" value="ECO:0000314"/>
    <property type="project" value="TAIR"/>
</dbReference>
<dbReference type="GO" id="GO:0046870">
    <property type="term" value="F:cadmium ion binding"/>
    <property type="evidence" value="ECO:0000314"/>
    <property type="project" value="TAIR"/>
</dbReference>
<dbReference type="GO" id="GO:0005507">
    <property type="term" value="F:copper ion binding"/>
    <property type="evidence" value="ECO:0000314"/>
    <property type="project" value="TAIR"/>
</dbReference>
<dbReference type="GO" id="GO:0016756">
    <property type="term" value="F:glutathione gamma-glutamylcysteinyltransferase activity"/>
    <property type="evidence" value="ECO:0000314"/>
    <property type="project" value="TAIR"/>
</dbReference>
<dbReference type="GO" id="GO:0015700">
    <property type="term" value="P:arsenite transport"/>
    <property type="evidence" value="ECO:0000314"/>
    <property type="project" value="TAIR"/>
</dbReference>
<dbReference type="GO" id="GO:0052544">
    <property type="term" value="P:defense response by callose deposition in cell wall"/>
    <property type="evidence" value="ECO:0000315"/>
    <property type="project" value="TAIR"/>
</dbReference>
<dbReference type="GO" id="GO:0042742">
    <property type="term" value="P:defense response to bacterium"/>
    <property type="evidence" value="ECO:0000315"/>
    <property type="project" value="TAIR"/>
</dbReference>
<dbReference type="GO" id="GO:0042344">
    <property type="term" value="P:indole glucosinolate catabolic process"/>
    <property type="evidence" value="ECO:0000315"/>
    <property type="project" value="TAIR"/>
</dbReference>
<dbReference type="GO" id="GO:0046938">
    <property type="term" value="P:phytochelatin biosynthetic process"/>
    <property type="evidence" value="ECO:0000315"/>
    <property type="project" value="TAIR"/>
</dbReference>
<dbReference type="GO" id="GO:0046685">
    <property type="term" value="P:response to arsenic-containing substance"/>
    <property type="evidence" value="ECO:0000314"/>
    <property type="project" value="TAIR"/>
</dbReference>
<dbReference type="GO" id="GO:0046686">
    <property type="term" value="P:response to cadmium ion"/>
    <property type="evidence" value="ECO:0000314"/>
    <property type="project" value="TAIR"/>
</dbReference>
<dbReference type="FunFam" id="3.90.70.30:FF:000001">
    <property type="entry name" value="Glutathione gamma-glutamylcysteinyltransferase 1"/>
    <property type="match status" value="1"/>
</dbReference>
<dbReference type="Gene3D" id="3.90.70.30">
    <property type="entry name" value="Phytochelatin synthase, N-terminal domain"/>
    <property type="match status" value="1"/>
</dbReference>
<dbReference type="InterPro" id="IPR038765">
    <property type="entry name" value="Papain-like_cys_pep_sf"/>
</dbReference>
<dbReference type="InterPro" id="IPR040409">
    <property type="entry name" value="PCS-like"/>
</dbReference>
<dbReference type="InterPro" id="IPR007719">
    <property type="entry name" value="PCS_N"/>
</dbReference>
<dbReference type="InterPro" id="IPR038156">
    <property type="entry name" value="PCS_N_sf"/>
</dbReference>
<dbReference type="InterPro" id="IPR015407">
    <property type="entry name" value="Phytochelatin_synthase_C"/>
</dbReference>
<dbReference type="PANTHER" id="PTHR33447">
    <property type="entry name" value="GLUTATHIONE GAMMA-GLUTAMYLCYSTEINYLTRANSFERASE"/>
    <property type="match status" value="1"/>
</dbReference>
<dbReference type="PANTHER" id="PTHR33447:SF2">
    <property type="entry name" value="GLUTATHIONE GAMMA-GLUTAMYLCYSTEINYLTRANSFERASE"/>
    <property type="match status" value="1"/>
</dbReference>
<dbReference type="Pfam" id="PF05023">
    <property type="entry name" value="Phytochelatin"/>
    <property type="match status" value="1"/>
</dbReference>
<dbReference type="Pfam" id="PF09328">
    <property type="entry name" value="Phytochelatin_C"/>
    <property type="match status" value="1"/>
</dbReference>
<dbReference type="SUPFAM" id="SSF54001">
    <property type="entry name" value="Cysteine proteinases"/>
    <property type="match status" value="1"/>
</dbReference>
<dbReference type="PROSITE" id="PS51443">
    <property type="entry name" value="PCS"/>
    <property type="match status" value="1"/>
</dbReference>
<name>PCS1_ARATH</name>
<reference key="1">
    <citation type="journal article" date="1999" name="Plant Cell">
        <title>Phytochelatin synthase genes from Arabidopsis and the yeast Schizosaccharomyces pombe.</title>
        <authorList>
            <person name="Ha S.-B."/>
            <person name="Smith A.P."/>
            <person name="Howden R."/>
            <person name="Dietrich W.M."/>
            <person name="Bugg S."/>
            <person name="O'Connell M.J."/>
            <person name="Goldsbrough P.B."/>
            <person name="Cobbett C.S."/>
        </authorList>
    </citation>
    <scope>NUCLEOTIDE SEQUENCE [MRNA]</scope>
    <scope>TISSUE SPECIFICITY</scope>
    <scope>INDUCTION BY COPPER</scope>
    <scope>LACK OF INDUCTION BY CADMIUM</scope>
    <scope>MUTAGENESIS OF ALA-59; CYS-91 AND TRP-190</scope>
</reference>
<reference key="2">
    <citation type="journal article" date="1999" name="EMBO J.">
        <title>Tolerance to toxic metals by a gene family of phytochelatin synthases from plants and yeast.</title>
        <authorList>
            <person name="Clemens S."/>
            <person name="Kim E.J."/>
            <person name="Neumann D."/>
            <person name="Schroeder J.I."/>
        </authorList>
    </citation>
    <scope>NUCLEOTIDE SEQUENCE [MRNA]</scope>
    <scope>TISSUE SPECIFICITY</scope>
</reference>
<reference key="3">
    <citation type="journal article" date="1999" name="Proc. Natl. Acad. Sci. U.S.A.">
        <title>AtPCS1, a phytochelatin synthase from Arabidopsis: isolation and in vitro reconstitution.</title>
        <authorList>
            <person name="Vatamaniuk O.K."/>
            <person name="Mari S."/>
            <person name="Lu Y.-P."/>
            <person name="Rea P.A."/>
        </authorList>
    </citation>
    <scope>NUCLEOTIDE SEQUENCE [GENOMIC DNA / MRNA]</scope>
    <scope>ACTIVITY REGULATION</scope>
</reference>
<reference key="4">
    <citation type="submission" date="1999-06" db="EMBL/GenBank/DDBJ databases">
        <title>Isolation of cadmium tolerance gene from Arabidopsis thaliana.</title>
        <authorList>
            <person name="Petrucco S."/>
            <person name="Bolchi A."/>
            <person name="Chiapponi C."/>
            <person name="Ottonello S."/>
        </authorList>
    </citation>
    <scope>NUCLEOTIDE SEQUENCE [MRNA]</scope>
</reference>
<reference key="5">
    <citation type="journal article" date="2003" name="Appl. Environ. Microbiol.">
        <title>Enhanced toxic metal accumulation in engineered bacterial cells expressing Arabidopsis thaliana phytochelatin synthase.</title>
        <authorList>
            <person name="Sauge-Merle S."/>
            <person name="Cuine S."/>
            <person name="Carrier P."/>
            <person name="Lecomte-Pradines C."/>
            <person name="Luu D.-T."/>
            <person name="Peltier G."/>
        </authorList>
    </citation>
    <scope>NUCLEOTIDE SEQUENCE [MRNA]</scope>
    <scope>FUNCTION</scope>
    <scope>ACTIVITY REGULATION</scope>
</reference>
<reference key="6">
    <citation type="journal article" date="1997" name="DNA Res.">
        <title>Structural analysis of Arabidopsis thaliana chromosome 5. II. Sequence features of the regions of 1,044,062 bp covered by thirteen physically assigned P1 clones.</title>
        <authorList>
            <person name="Kotani H."/>
            <person name="Nakamura Y."/>
            <person name="Sato S."/>
            <person name="Kaneko T."/>
            <person name="Asamizu E."/>
            <person name="Miyajima N."/>
            <person name="Tabata S."/>
        </authorList>
    </citation>
    <scope>NUCLEOTIDE SEQUENCE [LARGE SCALE GENOMIC DNA]</scope>
    <source>
        <strain>cv. Columbia</strain>
    </source>
</reference>
<reference key="7">
    <citation type="journal article" date="2017" name="Plant J.">
        <title>Araport11: a complete reannotation of the Arabidopsis thaliana reference genome.</title>
        <authorList>
            <person name="Cheng C.Y."/>
            <person name="Krishnakumar V."/>
            <person name="Chan A.P."/>
            <person name="Thibaud-Nissen F."/>
            <person name="Schobel S."/>
            <person name="Town C.D."/>
        </authorList>
    </citation>
    <scope>GENOME REANNOTATION</scope>
    <source>
        <strain>cv. Columbia</strain>
    </source>
</reference>
<reference key="8">
    <citation type="journal article" date="2003" name="Science">
        <title>Empirical analysis of transcriptional activity in the Arabidopsis genome.</title>
        <authorList>
            <person name="Yamada K."/>
            <person name="Lim J."/>
            <person name="Dale J.M."/>
            <person name="Chen H."/>
            <person name="Shinn P."/>
            <person name="Palm C.J."/>
            <person name="Southwick A.M."/>
            <person name="Wu H.C."/>
            <person name="Kim C.J."/>
            <person name="Nguyen M."/>
            <person name="Pham P.K."/>
            <person name="Cheuk R.F."/>
            <person name="Karlin-Newmann G."/>
            <person name="Liu S.X."/>
            <person name="Lam B."/>
            <person name="Sakano H."/>
            <person name="Wu T."/>
            <person name="Yu G."/>
            <person name="Miranda M."/>
            <person name="Quach H.L."/>
            <person name="Tripp M."/>
            <person name="Chang C.H."/>
            <person name="Lee J.M."/>
            <person name="Toriumi M.J."/>
            <person name="Chan M.M."/>
            <person name="Tang C.C."/>
            <person name="Onodera C.S."/>
            <person name="Deng J.M."/>
            <person name="Akiyama K."/>
            <person name="Ansari Y."/>
            <person name="Arakawa T."/>
            <person name="Banh J."/>
            <person name="Banno F."/>
            <person name="Bowser L."/>
            <person name="Brooks S.Y."/>
            <person name="Carninci P."/>
            <person name="Chao Q."/>
            <person name="Choy N."/>
            <person name="Enju A."/>
            <person name="Goldsmith A.D."/>
            <person name="Gurjal M."/>
            <person name="Hansen N.F."/>
            <person name="Hayashizaki Y."/>
            <person name="Johnson-Hopson C."/>
            <person name="Hsuan V.W."/>
            <person name="Iida K."/>
            <person name="Karnes M."/>
            <person name="Khan S."/>
            <person name="Koesema E."/>
            <person name="Ishida J."/>
            <person name="Jiang P.X."/>
            <person name="Jones T."/>
            <person name="Kawai J."/>
            <person name="Kamiya A."/>
            <person name="Meyers C."/>
            <person name="Nakajima M."/>
            <person name="Narusaka M."/>
            <person name="Seki M."/>
            <person name="Sakurai T."/>
            <person name="Satou M."/>
            <person name="Tamse R."/>
            <person name="Vaysberg M."/>
            <person name="Wallender E.K."/>
            <person name="Wong C."/>
            <person name="Yamamura Y."/>
            <person name="Yuan S."/>
            <person name="Shinozaki K."/>
            <person name="Davis R.W."/>
            <person name="Theologis A."/>
            <person name="Ecker J.R."/>
        </authorList>
    </citation>
    <scope>NUCLEOTIDE SEQUENCE [LARGE SCALE MRNA]</scope>
    <source>
        <strain>cv. Columbia</strain>
    </source>
</reference>
<reference key="9">
    <citation type="journal article" date="1987" name="Proc. Natl. Acad. Sci. U.S.A.">
        <title>Phytochelatins, a class of heavy-metal-binding peptides from plants, are functionally analogous to metallothioneins.</title>
        <authorList>
            <person name="Grill E."/>
            <person name="Winnacker E.-L."/>
            <person name="Zenk M.H."/>
        </authorList>
    </citation>
    <scope>FUNCTION</scope>
</reference>
<reference key="10">
    <citation type="journal article" date="1989" name="Proc. Natl. Acad. Sci. U.S.A.">
        <title>Phytochelatins, the heavy-metal-binding peptides of plants, are synthesized from glutathione by a specific gamma-glutamylcysteine dipeptidyl transpeptidase (phytochelatin synthase).</title>
        <authorList>
            <person name="Grill E."/>
            <person name="Loffler S."/>
            <person name="Winnacker E.-L."/>
            <person name="Zenk M.H."/>
        </authorList>
    </citation>
    <scope>FUNCTION</scope>
</reference>
<reference key="11">
    <citation type="journal article" date="2002" name="Planta">
        <title>Transcriptional regulation of Arabidopsis thaliana phytochelatin synthase (AtPCS1) by cadmium during early stages of plant development.</title>
        <authorList>
            <person name="Lee S."/>
            <person name="Korban S.S."/>
        </authorList>
    </citation>
    <scope>INDUCTION BY CADMIUM</scope>
    <scope>DEVELOPMENTAL STAGE</scope>
</reference>
<reference key="12">
    <citation type="journal article" date="2004" name="J. Biol. Chem.">
        <title>Domain organization of phytochelatin synthase: functional properties of truncated enzyme species identified by limited proteolysis.</title>
        <authorList>
            <person name="Ruotolo R."/>
            <person name="Peracchi A."/>
            <person name="Bolchi A."/>
            <person name="Infusini G."/>
            <person name="Amoresano A."/>
            <person name="Ottonello S."/>
        </authorList>
    </citation>
    <scope>CHARACTERIZATION</scope>
</reference>
<reference key="13">
    <citation type="journal article" date="2004" name="J. Biol. Chem.">
        <title>Phytochelatin synthase, a dipeptidyltransferase that undergoes multisite acylation with gamma-glutamylcysteine during catalysis: stoichiometric and site-directed mutagenic analysis of arabidopsis thaliana PCS1-catalyzed phytochelatin synthesis.</title>
        <authorList>
            <person name="Vatamaniuk O.K."/>
            <person name="Mari S."/>
            <person name="Lang A."/>
            <person name="Chalasani S."/>
            <person name="Demkiv L.O."/>
            <person name="Rea P.A."/>
        </authorList>
    </citation>
    <scope>FUNCTION</scope>
    <scope>MUTAGENESIS OF SER-21; CYS-56; CYS-90; CYS-91; CYS-109; CYS-113 AND SER-164</scope>
</reference>
<reference key="14">
    <citation type="journal article" date="2006" name="Plant Physiol.">
        <title>Mutagenic definition of a papain-like catalytic triad, sufficiency of the N-terminal domain for single-site core catalytic enzyme acylation, and C-terminal domain for augmentative metal activation of a eukaryotic phytochelatin synthase.</title>
        <authorList>
            <person name="Romanyuk N.D."/>
            <person name="Rigden D.J."/>
            <person name="Vatamaniuk O.K."/>
            <person name="Lang A."/>
            <person name="Cahoon R.E."/>
            <person name="Jez J.M."/>
            <person name="Rea P.A."/>
        </authorList>
    </citation>
    <scope>CHARACTERIZATION</scope>
    <scope>MUTAGENESIS OF TYR-7; SER-21; CYS-56; ASP-71; ASP-84; ASP-89; CYS-90; CYS-91; CYS-109; CYS-113; THR-158; HIS-162; SER-164; ASP-174; ASP-180; TYR-186; HIS-189; ASP-204 AND HIS-220</scope>
</reference>
<reference key="15">
    <citation type="journal article" date="2006" name="Plant Physiol.">
        <title>A reassessment of substrate specificity and activation of phytochelatin synthases from model plants by physiologically relevant metals.</title>
        <authorList>
            <person name="Loscos J."/>
            <person name="Naya L."/>
            <person name="Ramos J."/>
            <person name="Clemente M.R."/>
            <person name="Matamoros M.A."/>
            <person name="Becana M."/>
        </authorList>
    </citation>
    <scope>ACTIVITY REGULATION</scope>
    <source>
        <tissue>Root</tissue>
    </source>
</reference>
<reference key="16">
    <citation type="journal article" date="2007" name="Mol. Cell. Proteomics">
        <title>Multidimensional protein identification technology (MudPIT) analysis of ubiquitinated proteins in plants.</title>
        <authorList>
            <person name="Maor R."/>
            <person name="Jones A."/>
            <person name="Nuehse T.S."/>
            <person name="Studholme D.J."/>
            <person name="Peck S.C."/>
            <person name="Shirasu K."/>
        </authorList>
    </citation>
    <scope>IDENTIFICATION BY MASS SPECTROMETRY [LARGE SCALE ANALYSIS]</scope>
    <source>
        <strain>cv. Landsberg erecta</strain>
    </source>
</reference>
<reference key="17">
    <citation type="journal article" date="2007" name="Plant J.">
        <title>Function of phytochelatin synthase in catabolism of glutathione-conjugates.</title>
        <authorList>
            <person name="Blum R."/>
            <person name="Beck A."/>
            <person name="Korte A."/>
            <person name="Stengel A."/>
            <person name="Letzel T."/>
            <person name="Lendzian K."/>
            <person name="Grill E."/>
        </authorList>
    </citation>
    <scope>FUNCTION</scope>
    <scope>DISRUPTION PHENOTYPE</scope>
</reference>
<evidence type="ECO:0000255" key="1">
    <source>
        <dbReference type="PROSITE-ProRule" id="PRU00773"/>
    </source>
</evidence>
<evidence type="ECO:0000269" key="2">
    <source>
    </source>
</evidence>
<evidence type="ECO:0000269" key="3">
    <source>
    </source>
</evidence>
<evidence type="ECO:0000269" key="4">
    <source>
    </source>
</evidence>
<evidence type="ECO:0000269" key="5">
    <source>
    </source>
</evidence>
<evidence type="ECO:0000269" key="6">
    <source>
    </source>
</evidence>
<evidence type="ECO:0000269" key="7">
    <source>
    </source>
</evidence>
<evidence type="ECO:0000269" key="8">
    <source>
    </source>
</evidence>
<evidence type="ECO:0000269" key="9">
    <source>
    </source>
</evidence>
<evidence type="ECO:0000269" key="10">
    <source>
    </source>
</evidence>
<evidence type="ECO:0000269" key="11">
    <source>
    </source>
</evidence>
<evidence type="ECO:0000269" key="12">
    <source>
    </source>
</evidence>
<evidence type="ECO:0000305" key="13"/>
<keyword id="KW-0012">Acyltransferase</keyword>
<keyword id="KW-0104">Cadmium</keyword>
<keyword id="KW-0186">Copper</keyword>
<keyword id="KW-0479">Metal-binding</keyword>
<keyword id="KW-1185">Reference proteome</keyword>
<keyword id="KW-0808">Transferase</keyword>
<keyword id="KW-0862">Zinc</keyword>
<organism>
    <name type="scientific">Arabidopsis thaliana</name>
    <name type="common">Mouse-ear cress</name>
    <dbReference type="NCBI Taxonomy" id="3702"/>
    <lineage>
        <taxon>Eukaryota</taxon>
        <taxon>Viridiplantae</taxon>
        <taxon>Streptophyta</taxon>
        <taxon>Embryophyta</taxon>
        <taxon>Tracheophyta</taxon>
        <taxon>Spermatophyta</taxon>
        <taxon>Magnoliopsida</taxon>
        <taxon>eudicotyledons</taxon>
        <taxon>Gunneridae</taxon>
        <taxon>Pentapetalae</taxon>
        <taxon>rosids</taxon>
        <taxon>malvids</taxon>
        <taxon>Brassicales</taxon>
        <taxon>Brassicaceae</taxon>
        <taxon>Camelineae</taxon>
        <taxon>Arabidopsis</taxon>
    </lineage>
</organism>
<protein>
    <recommendedName>
        <fullName>Glutathione gamma-glutamylcysteinyltransferase 1</fullName>
        <ecNumber>2.3.2.15</ecNumber>
    </recommendedName>
    <alternativeName>
        <fullName>Cadmium tolerance protein</fullName>
    </alternativeName>
    <alternativeName>
        <fullName>Phytochelatin synthase 1</fullName>
        <shortName>AtPCS1</shortName>
    </alternativeName>
</protein>
<feature type="chain" id="PRO_0000287210" description="Glutathione gamma-glutamylcysteinyltransferase 1">
    <location>
        <begin position="1"/>
        <end position="485"/>
    </location>
</feature>
<feature type="domain" description="Peptidase C83" evidence="1">
    <location>
        <begin position="1"/>
        <end position="221"/>
    </location>
</feature>
<feature type="active site">
    <location>
        <position position="56"/>
    </location>
</feature>
<feature type="active site">
    <location>
        <position position="162"/>
    </location>
</feature>
<feature type="active site">
    <location>
        <position position="180"/>
    </location>
</feature>
<feature type="mutagenesis site" description="No effect." evidence="11">
    <original>Y</original>
    <variation>A</variation>
    <location>
        <position position="7"/>
    </location>
</feature>
<feature type="mutagenesis site" description="No effect." evidence="7 11">
    <original>S</original>
    <variation>A</variation>
    <location>
        <position position="21"/>
    </location>
</feature>
<feature type="mutagenesis site" description="Loss of function." evidence="7 11">
    <original>C</original>
    <variation>S</variation>
    <variation>A</variation>
    <location>
        <position position="56"/>
    </location>
</feature>
<feature type="mutagenesis site" description="In cad1-4; loss of function." evidence="3">
    <original>A</original>
    <variation>V</variation>
    <location>
        <position position="59"/>
    </location>
</feature>
<feature type="mutagenesis site" description="Decreased activity." evidence="11">
    <original>D</original>
    <variation>A</variation>
    <location>
        <position position="71"/>
    </location>
</feature>
<feature type="mutagenesis site" description="No effect." evidence="11">
    <original>D</original>
    <variation>A</variation>
    <location>
        <position position="84"/>
    </location>
</feature>
<feature type="mutagenesis site" description="Slightly decreased activity." evidence="11">
    <original>D</original>
    <variation>A</variation>
    <location>
        <position position="89"/>
    </location>
</feature>
<feature type="mutagenesis site" description="Decreased activity." evidence="7 11">
    <original>C</original>
    <variation>S</variation>
    <variation>A</variation>
    <location>
        <position position="90"/>
    </location>
</feature>
<feature type="mutagenesis site" description="No effect." evidence="3 7 11">
    <original>C</original>
    <variation>S</variation>
    <variation>A</variation>
    <location>
        <position position="91"/>
    </location>
</feature>
<feature type="mutagenesis site" description="In cad1-1; loss of function." evidence="3 7 11">
    <original>C</original>
    <variation>Y</variation>
    <location>
        <position position="91"/>
    </location>
</feature>
<feature type="mutagenesis site" description="No effect." evidence="7 11">
    <original>C</original>
    <variation>S</variation>
    <variation>A</variation>
    <location>
        <position position="109"/>
    </location>
</feature>
<feature type="mutagenesis site" description="No effect." evidence="7 11">
    <original>C</original>
    <variation>S</variation>
    <variation>A</variation>
    <location>
        <position position="113"/>
    </location>
</feature>
<feature type="mutagenesis site" description="No effect." evidence="11">
    <original>T</original>
    <variation>A</variation>
    <location>
        <position position="158"/>
    </location>
</feature>
<feature type="mutagenesis site" description="Loss of function." evidence="11">
    <original>H</original>
    <variation>A</variation>
    <location>
        <position position="162"/>
    </location>
</feature>
<feature type="mutagenesis site" description="No effect." evidence="7 11">
    <original>S</original>
    <variation>A</variation>
    <location>
        <position position="164"/>
    </location>
</feature>
<feature type="mutagenesis site" description="Decreased activity." evidence="11">
    <original>D</original>
    <variation>A</variation>
    <location>
        <position position="174"/>
    </location>
</feature>
<feature type="mutagenesis site" description="Loss of function." evidence="11">
    <original>D</original>
    <variation>A</variation>
    <location>
        <position position="180"/>
    </location>
</feature>
<feature type="mutagenesis site" description="No effect." evidence="11">
    <original>Y</original>
    <variation>A</variation>
    <location>
        <position position="186"/>
    </location>
</feature>
<feature type="mutagenesis site" description="Decreased activity." evidence="11">
    <original>H</original>
    <variation>A</variation>
    <location>
        <position position="189"/>
    </location>
</feature>
<feature type="mutagenesis site" description="In cad1-3; loss of function." evidence="3">
    <original>W</original>
    <variation>C</variation>
    <location>
        <position position="190"/>
    </location>
</feature>
<feature type="mutagenesis site" description="Decreased activity." evidence="11">
    <original>D</original>
    <variation>A</variation>
    <location>
        <position position="204"/>
    </location>
</feature>
<feature type="mutagenesis site" description="Decreased activity." evidence="11">
    <original>H</original>
    <variation>A</variation>
    <location>
        <position position="220"/>
    </location>
</feature>
<feature type="sequence conflict" description="In Ref. 3; AAD16046." evidence="13" ref="3">
    <original>G</original>
    <variation>S</variation>
    <location>
        <position position="153"/>
    </location>
</feature>
<feature type="sequence conflict" description="In Ref. 3; AAD16046." evidence="13" ref="3">
    <original>T</original>
    <variation>N</variation>
    <location>
        <position position="160"/>
    </location>
</feature>
<feature type="sequence conflict" description="In Ref. 5; AAL66747." evidence="13" ref="5">
    <original>E</original>
    <variation>A</variation>
    <location>
        <position position="298"/>
    </location>
</feature>